<evidence type="ECO:0000250" key="1"/>
<evidence type="ECO:0000305" key="2"/>
<name>MURB1_BACCR</name>
<proteinExistence type="inferred from homology"/>
<accession>Q819Q4</accession>
<protein>
    <recommendedName>
        <fullName>UDP-N-acetylenolpyruvoylglucosamine reductase 1</fullName>
        <ecNumber>1.3.1.98</ecNumber>
    </recommendedName>
    <alternativeName>
        <fullName>UDP-N-acetylmuramate dehydrogenase 1</fullName>
    </alternativeName>
</protein>
<reference key="1">
    <citation type="journal article" date="2003" name="Nature">
        <title>Genome sequence of Bacillus cereus and comparative analysis with Bacillus anthracis.</title>
        <authorList>
            <person name="Ivanova N."/>
            <person name="Sorokin A."/>
            <person name="Anderson I."/>
            <person name="Galleron N."/>
            <person name="Candelon B."/>
            <person name="Kapatral V."/>
            <person name="Bhattacharyya A."/>
            <person name="Reznik G."/>
            <person name="Mikhailova N."/>
            <person name="Lapidus A."/>
            <person name="Chu L."/>
            <person name="Mazur M."/>
            <person name="Goltsman E."/>
            <person name="Larsen N."/>
            <person name="D'Souza M."/>
            <person name="Walunas T."/>
            <person name="Grechkin Y."/>
            <person name="Pusch G."/>
            <person name="Haselkorn R."/>
            <person name="Fonstein M."/>
            <person name="Ehrlich S.D."/>
            <person name="Overbeek R."/>
            <person name="Kyrpides N.C."/>
        </authorList>
    </citation>
    <scope>NUCLEOTIDE SEQUENCE [LARGE SCALE GENOMIC DNA]</scope>
    <source>
        <strain>ATCC 14579 / DSM 31 / CCUG 7414 / JCM 2152 / NBRC 15305 / NCIMB 9373 / NCTC 2599 / NRRL B-3711</strain>
    </source>
</reference>
<feature type="chain" id="PRO_0000179174" description="UDP-N-acetylenolpyruvoylglucosamine reductase 1">
    <location>
        <begin position="1"/>
        <end position="301"/>
    </location>
</feature>
<feature type="domain" description="FAD-binding PCMH-type">
    <location>
        <begin position="29"/>
        <end position="196"/>
    </location>
</feature>
<feature type="active site" evidence="1">
    <location>
        <position position="174"/>
    </location>
</feature>
<feature type="active site" description="Proton donor" evidence="1">
    <location>
        <position position="225"/>
    </location>
</feature>
<feature type="active site" evidence="1">
    <location>
        <position position="295"/>
    </location>
</feature>
<gene>
    <name type="primary">murB1</name>
    <name type="ordered locus">BC_3909</name>
</gene>
<comment type="function">
    <text evidence="1">Cell wall formation.</text>
</comment>
<comment type="catalytic activity">
    <reaction>
        <text>UDP-N-acetyl-alpha-D-muramate + NADP(+) = UDP-N-acetyl-3-O-(1-carboxyvinyl)-alpha-D-glucosamine + NADPH + H(+)</text>
        <dbReference type="Rhea" id="RHEA:12248"/>
        <dbReference type="ChEBI" id="CHEBI:15378"/>
        <dbReference type="ChEBI" id="CHEBI:57783"/>
        <dbReference type="ChEBI" id="CHEBI:58349"/>
        <dbReference type="ChEBI" id="CHEBI:68483"/>
        <dbReference type="ChEBI" id="CHEBI:70757"/>
        <dbReference type="EC" id="1.3.1.98"/>
    </reaction>
</comment>
<comment type="cofactor">
    <cofactor evidence="1">
        <name>FAD</name>
        <dbReference type="ChEBI" id="CHEBI:57692"/>
    </cofactor>
</comment>
<comment type="pathway">
    <text>Cell wall biogenesis; peptidoglycan biosynthesis.</text>
</comment>
<comment type="subcellular location">
    <subcellularLocation>
        <location evidence="1">Cytoplasm</location>
    </subcellularLocation>
</comment>
<comment type="similarity">
    <text evidence="2">Belongs to the MurB family.</text>
</comment>
<organism>
    <name type="scientific">Bacillus cereus (strain ATCC 14579 / DSM 31 / CCUG 7414 / JCM 2152 / NBRC 15305 / NCIMB 9373 / NCTC 2599 / NRRL B-3711)</name>
    <dbReference type="NCBI Taxonomy" id="226900"/>
    <lineage>
        <taxon>Bacteria</taxon>
        <taxon>Bacillati</taxon>
        <taxon>Bacillota</taxon>
        <taxon>Bacilli</taxon>
        <taxon>Bacillales</taxon>
        <taxon>Bacillaceae</taxon>
        <taxon>Bacillus</taxon>
        <taxon>Bacillus cereus group</taxon>
    </lineage>
</organism>
<keyword id="KW-0131">Cell cycle</keyword>
<keyword id="KW-0132">Cell division</keyword>
<keyword id="KW-0133">Cell shape</keyword>
<keyword id="KW-0961">Cell wall biogenesis/degradation</keyword>
<keyword id="KW-0963">Cytoplasm</keyword>
<keyword id="KW-0274">FAD</keyword>
<keyword id="KW-0285">Flavoprotein</keyword>
<keyword id="KW-0521">NADP</keyword>
<keyword id="KW-0560">Oxidoreductase</keyword>
<keyword id="KW-0573">Peptidoglycan synthesis</keyword>
<keyword id="KW-1185">Reference proteome</keyword>
<dbReference type="EC" id="1.3.1.98"/>
<dbReference type="EMBL" id="AE016877">
    <property type="protein sequence ID" value="AAP10830.1"/>
    <property type="molecule type" value="Genomic_DNA"/>
</dbReference>
<dbReference type="RefSeq" id="NP_833629.1">
    <property type="nucleotide sequence ID" value="NC_004722.1"/>
</dbReference>
<dbReference type="SMR" id="Q819Q4"/>
<dbReference type="STRING" id="226900.BC_3909"/>
<dbReference type="KEGG" id="bce:BC3909"/>
<dbReference type="PATRIC" id="fig|226900.8.peg.4031"/>
<dbReference type="HOGENOM" id="CLU_035304_1_1_9"/>
<dbReference type="OrthoDB" id="9804753at2"/>
<dbReference type="UniPathway" id="UPA00219"/>
<dbReference type="Proteomes" id="UP000001417">
    <property type="component" value="Chromosome"/>
</dbReference>
<dbReference type="GO" id="GO:0005829">
    <property type="term" value="C:cytosol"/>
    <property type="evidence" value="ECO:0000318"/>
    <property type="project" value="GO_Central"/>
</dbReference>
<dbReference type="GO" id="GO:0071949">
    <property type="term" value="F:FAD binding"/>
    <property type="evidence" value="ECO:0007669"/>
    <property type="project" value="InterPro"/>
</dbReference>
<dbReference type="GO" id="GO:0050660">
    <property type="term" value="F:flavin adenine dinucleotide binding"/>
    <property type="evidence" value="ECO:0000318"/>
    <property type="project" value="GO_Central"/>
</dbReference>
<dbReference type="GO" id="GO:0008762">
    <property type="term" value="F:UDP-N-acetylmuramate dehydrogenase activity"/>
    <property type="evidence" value="ECO:0000318"/>
    <property type="project" value="GO_Central"/>
</dbReference>
<dbReference type="GO" id="GO:0051301">
    <property type="term" value="P:cell division"/>
    <property type="evidence" value="ECO:0007669"/>
    <property type="project" value="UniProtKB-KW"/>
</dbReference>
<dbReference type="GO" id="GO:0071555">
    <property type="term" value="P:cell wall organization"/>
    <property type="evidence" value="ECO:0000318"/>
    <property type="project" value="GO_Central"/>
</dbReference>
<dbReference type="GO" id="GO:0009252">
    <property type="term" value="P:peptidoglycan biosynthetic process"/>
    <property type="evidence" value="ECO:0007669"/>
    <property type="project" value="UniProtKB-UniRule"/>
</dbReference>
<dbReference type="GO" id="GO:0008360">
    <property type="term" value="P:regulation of cell shape"/>
    <property type="evidence" value="ECO:0007669"/>
    <property type="project" value="UniProtKB-KW"/>
</dbReference>
<dbReference type="Gene3D" id="3.30.465.10">
    <property type="match status" value="1"/>
</dbReference>
<dbReference type="Gene3D" id="3.90.78.10">
    <property type="entry name" value="UDP-N-acetylenolpyruvoylglucosamine reductase, C-terminal domain"/>
    <property type="match status" value="1"/>
</dbReference>
<dbReference type="Gene3D" id="3.30.43.10">
    <property type="entry name" value="Uridine Diphospho-n-acetylenolpyruvylglucosamine Reductase, domain 2"/>
    <property type="match status" value="1"/>
</dbReference>
<dbReference type="HAMAP" id="MF_00037">
    <property type="entry name" value="MurB"/>
    <property type="match status" value="1"/>
</dbReference>
<dbReference type="InterPro" id="IPR016166">
    <property type="entry name" value="FAD-bd_PCMH"/>
</dbReference>
<dbReference type="InterPro" id="IPR036318">
    <property type="entry name" value="FAD-bd_PCMH-like_sf"/>
</dbReference>
<dbReference type="InterPro" id="IPR016167">
    <property type="entry name" value="FAD-bd_PCMH_sub1"/>
</dbReference>
<dbReference type="InterPro" id="IPR016169">
    <property type="entry name" value="FAD-bd_PCMH_sub2"/>
</dbReference>
<dbReference type="InterPro" id="IPR003170">
    <property type="entry name" value="MurB"/>
</dbReference>
<dbReference type="InterPro" id="IPR011601">
    <property type="entry name" value="MurB_C"/>
</dbReference>
<dbReference type="InterPro" id="IPR036635">
    <property type="entry name" value="MurB_C_sf"/>
</dbReference>
<dbReference type="InterPro" id="IPR006094">
    <property type="entry name" value="Oxid_FAD_bind_N"/>
</dbReference>
<dbReference type="NCBIfam" id="TIGR00179">
    <property type="entry name" value="murB"/>
    <property type="match status" value="1"/>
</dbReference>
<dbReference type="NCBIfam" id="NF010480">
    <property type="entry name" value="PRK13905.1"/>
    <property type="match status" value="1"/>
</dbReference>
<dbReference type="PANTHER" id="PTHR21071">
    <property type="entry name" value="UDP-N-ACETYLENOLPYRUVOYLGLUCOSAMINE REDUCTASE"/>
    <property type="match status" value="1"/>
</dbReference>
<dbReference type="PANTHER" id="PTHR21071:SF5">
    <property type="entry name" value="UDP-N-ACETYLENOLPYRUVOYLGLUCOSAMINE REDUCTASE"/>
    <property type="match status" value="1"/>
</dbReference>
<dbReference type="Pfam" id="PF01565">
    <property type="entry name" value="FAD_binding_4"/>
    <property type="match status" value="1"/>
</dbReference>
<dbReference type="Pfam" id="PF02873">
    <property type="entry name" value="MurB_C"/>
    <property type="match status" value="1"/>
</dbReference>
<dbReference type="SUPFAM" id="SSF56176">
    <property type="entry name" value="FAD-binding/transporter-associated domain-like"/>
    <property type="match status" value="1"/>
</dbReference>
<dbReference type="SUPFAM" id="SSF56194">
    <property type="entry name" value="Uridine diphospho-N-Acetylenolpyruvylglucosamine reductase, MurB, C-terminal domain"/>
    <property type="match status" value="1"/>
</dbReference>
<dbReference type="PROSITE" id="PS51387">
    <property type="entry name" value="FAD_PCMH"/>
    <property type="match status" value="1"/>
</dbReference>
<sequence>MEQLVNELIEADVGRVLVNEPLARYTTMKIGGPADILIVPKHVAGIEKTLQLVKQYKTKWTVIGRGSNLLVSDQGIEGVVIRLGEGLDHLEVEKHKVRVGSGYPLIKLSTLLSRQGLAGLEFASGIPGSVGGAVYMNAGAHKSDISSVLSKALILFEDGAIDWLTNKELEFSYRASVLQTKRPGIVLEAVFQLQAGKREEIVRSMQNNKDYRRETQPWNHPCAGSVFRNPIPHFAGDLVEKAGLRGYRIGGAQISEMHGNFIVNTGGASAQDVLSLIELIKHTIKDKFDVDMHTEVEIIGR</sequence>